<feature type="chain" id="PRO_0000349550" description="tRNA-specific 2-thiouridylase MnmA">
    <location>
        <begin position="1"/>
        <end position="391"/>
    </location>
</feature>
<feature type="region of interest" description="Interaction with target base in tRNA" evidence="1">
    <location>
        <begin position="95"/>
        <end position="97"/>
    </location>
</feature>
<feature type="region of interest" description="Interaction with tRNA" evidence="1">
    <location>
        <begin position="146"/>
        <end position="148"/>
    </location>
</feature>
<feature type="region of interest" description="Interaction with tRNA" evidence="1">
    <location>
        <begin position="308"/>
        <end position="309"/>
    </location>
</feature>
<feature type="active site" description="Nucleophile" evidence="1">
    <location>
        <position position="100"/>
    </location>
</feature>
<feature type="active site" description="Cysteine persulfide intermediate" evidence="1">
    <location>
        <position position="196"/>
    </location>
</feature>
<feature type="binding site" evidence="1">
    <location>
        <begin position="9"/>
        <end position="16"/>
    </location>
    <ligand>
        <name>ATP</name>
        <dbReference type="ChEBI" id="CHEBI:30616"/>
    </ligand>
</feature>
<feature type="binding site" evidence="1">
    <location>
        <position position="35"/>
    </location>
    <ligand>
        <name>ATP</name>
        <dbReference type="ChEBI" id="CHEBI:30616"/>
    </ligand>
</feature>
<feature type="binding site" evidence="1">
    <location>
        <position position="124"/>
    </location>
    <ligand>
        <name>ATP</name>
        <dbReference type="ChEBI" id="CHEBI:30616"/>
    </ligand>
</feature>
<feature type="site" description="Interaction with tRNA" evidence="1">
    <location>
        <position position="125"/>
    </location>
</feature>
<feature type="site" description="Interaction with tRNA" evidence="1">
    <location>
        <position position="351"/>
    </location>
</feature>
<feature type="disulfide bond" description="Alternate" evidence="1">
    <location>
        <begin position="100"/>
        <end position="196"/>
    </location>
</feature>
<name>MNMA_BURO1</name>
<organism>
    <name type="scientific">Burkholderia orbicola (strain AU 1054)</name>
    <dbReference type="NCBI Taxonomy" id="331271"/>
    <lineage>
        <taxon>Bacteria</taxon>
        <taxon>Pseudomonadati</taxon>
        <taxon>Pseudomonadota</taxon>
        <taxon>Betaproteobacteria</taxon>
        <taxon>Burkholderiales</taxon>
        <taxon>Burkholderiaceae</taxon>
        <taxon>Burkholderia</taxon>
        <taxon>Burkholderia cepacia complex</taxon>
        <taxon>Burkholderia orbicola</taxon>
    </lineage>
</organism>
<proteinExistence type="inferred from homology"/>
<protein>
    <recommendedName>
        <fullName evidence="1">tRNA-specific 2-thiouridylase MnmA</fullName>
        <ecNumber evidence="1">2.8.1.13</ecNumber>
    </recommendedName>
</protein>
<dbReference type="EC" id="2.8.1.13" evidence="1"/>
<dbReference type="EMBL" id="CP000378">
    <property type="protein sequence ID" value="ABF75128.1"/>
    <property type="molecule type" value="Genomic_DNA"/>
</dbReference>
<dbReference type="SMR" id="Q1BZ27"/>
<dbReference type="HOGENOM" id="CLU_035188_1_0_4"/>
<dbReference type="GO" id="GO:0005737">
    <property type="term" value="C:cytoplasm"/>
    <property type="evidence" value="ECO:0007669"/>
    <property type="project" value="UniProtKB-SubCell"/>
</dbReference>
<dbReference type="GO" id="GO:0005524">
    <property type="term" value="F:ATP binding"/>
    <property type="evidence" value="ECO:0007669"/>
    <property type="project" value="UniProtKB-KW"/>
</dbReference>
<dbReference type="GO" id="GO:0000049">
    <property type="term" value="F:tRNA binding"/>
    <property type="evidence" value="ECO:0007669"/>
    <property type="project" value="UniProtKB-KW"/>
</dbReference>
<dbReference type="GO" id="GO:0103016">
    <property type="term" value="F:tRNA-uridine 2-sulfurtransferase activity"/>
    <property type="evidence" value="ECO:0007669"/>
    <property type="project" value="UniProtKB-EC"/>
</dbReference>
<dbReference type="GO" id="GO:0002143">
    <property type="term" value="P:tRNA wobble position uridine thiolation"/>
    <property type="evidence" value="ECO:0007669"/>
    <property type="project" value="TreeGrafter"/>
</dbReference>
<dbReference type="CDD" id="cd01998">
    <property type="entry name" value="MnmA_TRMU-like"/>
    <property type="match status" value="1"/>
</dbReference>
<dbReference type="FunFam" id="2.30.30.280:FF:000001">
    <property type="entry name" value="tRNA-specific 2-thiouridylase MnmA"/>
    <property type="match status" value="1"/>
</dbReference>
<dbReference type="FunFam" id="2.40.30.10:FF:000023">
    <property type="entry name" value="tRNA-specific 2-thiouridylase MnmA"/>
    <property type="match status" value="1"/>
</dbReference>
<dbReference type="FunFam" id="3.40.50.620:FF:000004">
    <property type="entry name" value="tRNA-specific 2-thiouridylase MnmA"/>
    <property type="match status" value="1"/>
</dbReference>
<dbReference type="Gene3D" id="2.30.30.280">
    <property type="entry name" value="Adenine nucleotide alpha hydrolases-like domains"/>
    <property type="match status" value="1"/>
</dbReference>
<dbReference type="Gene3D" id="3.40.50.620">
    <property type="entry name" value="HUPs"/>
    <property type="match status" value="1"/>
</dbReference>
<dbReference type="Gene3D" id="2.40.30.10">
    <property type="entry name" value="Translation factors"/>
    <property type="match status" value="1"/>
</dbReference>
<dbReference type="HAMAP" id="MF_00144">
    <property type="entry name" value="tRNA_thiouridyl_MnmA"/>
    <property type="match status" value="1"/>
</dbReference>
<dbReference type="InterPro" id="IPR004506">
    <property type="entry name" value="MnmA-like"/>
</dbReference>
<dbReference type="InterPro" id="IPR046885">
    <property type="entry name" value="MnmA-like_C"/>
</dbReference>
<dbReference type="InterPro" id="IPR046884">
    <property type="entry name" value="MnmA-like_central"/>
</dbReference>
<dbReference type="InterPro" id="IPR023382">
    <property type="entry name" value="MnmA-like_central_sf"/>
</dbReference>
<dbReference type="InterPro" id="IPR014729">
    <property type="entry name" value="Rossmann-like_a/b/a_fold"/>
</dbReference>
<dbReference type="NCBIfam" id="NF001138">
    <property type="entry name" value="PRK00143.1"/>
    <property type="match status" value="1"/>
</dbReference>
<dbReference type="NCBIfam" id="TIGR00420">
    <property type="entry name" value="trmU"/>
    <property type="match status" value="1"/>
</dbReference>
<dbReference type="PANTHER" id="PTHR11933:SF5">
    <property type="entry name" value="MITOCHONDRIAL TRNA-SPECIFIC 2-THIOURIDYLASE 1"/>
    <property type="match status" value="1"/>
</dbReference>
<dbReference type="PANTHER" id="PTHR11933">
    <property type="entry name" value="TRNA 5-METHYLAMINOMETHYL-2-THIOURIDYLATE -METHYLTRANSFERASE"/>
    <property type="match status" value="1"/>
</dbReference>
<dbReference type="Pfam" id="PF03054">
    <property type="entry name" value="tRNA_Me_trans"/>
    <property type="match status" value="1"/>
</dbReference>
<dbReference type="Pfam" id="PF20258">
    <property type="entry name" value="tRNA_Me_trans_C"/>
    <property type="match status" value="1"/>
</dbReference>
<dbReference type="Pfam" id="PF20259">
    <property type="entry name" value="tRNA_Me_trans_M"/>
    <property type="match status" value="1"/>
</dbReference>
<dbReference type="SUPFAM" id="SSF52402">
    <property type="entry name" value="Adenine nucleotide alpha hydrolases-like"/>
    <property type="match status" value="1"/>
</dbReference>
<keyword id="KW-0067">ATP-binding</keyword>
<keyword id="KW-0963">Cytoplasm</keyword>
<keyword id="KW-1015">Disulfide bond</keyword>
<keyword id="KW-0547">Nucleotide-binding</keyword>
<keyword id="KW-0694">RNA-binding</keyword>
<keyword id="KW-0808">Transferase</keyword>
<keyword id="KW-0819">tRNA processing</keyword>
<keyword id="KW-0820">tRNA-binding</keyword>
<accession>Q1BZ27</accession>
<comment type="function">
    <text evidence="1">Catalyzes the 2-thiolation of uridine at the wobble position (U34) of tRNA, leading to the formation of s(2)U34.</text>
</comment>
<comment type="catalytic activity">
    <reaction evidence="1">
        <text>S-sulfanyl-L-cysteinyl-[protein] + uridine(34) in tRNA + AH2 + ATP = 2-thiouridine(34) in tRNA + L-cysteinyl-[protein] + A + AMP + diphosphate + H(+)</text>
        <dbReference type="Rhea" id="RHEA:47032"/>
        <dbReference type="Rhea" id="RHEA-COMP:10131"/>
        <dbReference type="Rhea" id="RHEA-COMP:11726"/>
        <dbReference type="Rhea" id="RHEA-COMP:11727"/>
        <dbReference type="Rhea" id="RHEA-COMP:11728"/>
        <dbReference type="ChEBI" id="CHEBI:13193"/>
        <dbReference type="ChEBI" id="CHEBI:15378"/>
        <dbReference type="ChEBI" id="CHEBI:17499"/>
        <dbReference type="ChEBI" id="CHEBI:29950"/>
        <dbReference type="ChEBI" id="CHEBI:30616"/>
        <dbReference type="ChEBI" id="CHEBI:33019"/>
        <dbReference type="ChEBI" id="CHEBI:61963"/>
        <dbReference type="ChEBI" id="CHEBI:65315"/>
        <dbReference type="ChEBI" id="CHEBI:87170"/>
        <dbReference type="ChEBI" id="CHEBI:456215"/>
        <dbReference type="EC" id="2.8.1.13"/>
    </reaction>
</comment>
<comment type="subcellular location">
    <subcellularLocation>
        <location evidence="1">Cytoplasm</location>
    </subcellularLocation>
</comment>
<comment type="similarity">
    <text evidence="1">Belongs to the MnmA/TRMU family.</text>
</comment>
<gene>
    <name evidence="1" type="primary">mnmA</name>
    <name type="ordered locus">Bcen_0214</name>
</gene>
<reference key="1">
    <citation type="submission" date="2006-05" db="EMBL/GenBank/DDBJ databases">
        <title>Complete sequence of chromosome 1 of Burkholderia cenocepacia AU 1054.</title>
        <authorList>
            <consortium name="US DOE Joint Genome Institute"/>
            <person name="Copeland A."/>
            <person name="Lucas S."/>
            <person name="Lapidus A."/>
            <person name="Barry K."/>
            <person name="Detter J.C."/>
            <person name="Glavina del Rio T."/>
            <person name="Hammon N."/>
            <person name="Israni S."/>
            <person name="Dalin E."/>
            <person name="Tice H."/>
            <person name="Pitluck S."/>
            <person name="Chain P."/>
            <person name="Malfatti S."/>
            <person name="Shin M."/>
            <person name="Vergez L."/>
            <person name="Schmutz J."/>
            <person name="Larimer F."/>
            <person name="Land M."/>
            <person name="Hauser L."/>
            <person name="Kyrpides N."/>
            <person name="Lykidis A."/>
            <person name="LiPuma J.J."/>
            <person name="Konstantinidis K."/>
            <person name="Tiedje J.M."/>
            <person name="Richardson P."/>
        </authorList>
    </citation>
    <scope>NUCLEOTIDE SEQUENCE [LARGE SCALE GENOMIC DNA]</scope>
    <source>
        <strain>AU 1054</strain>
    </source>
</reference>
<evidence type="ECO:0000255" key="1">
    <source>
        <dbReference type="HAMAP-Rule" id="MF_00144"/>
    </source>
</evidence>
<sequence length="391" mass="42180">MSKRRVVVGMSGGVDSSVTAWLLKEQGYDVVGLFMKNWEDDDDGEYCSTRQDWIDVVSVADLIGIDVEAVNFAAEYKDRVFAEFLREYSAGRTPNPDVLCNAEIKFKAFLDHAMSLDAEMIATGHYARVRERDGRFELLKAFDHTKDQSYFLHRLNQAQLSKTMFPLGEIPKTKVREIAAQIGLPNAKKKDSTGICFIGERPFRDFLNRYLPTKPGPMKTPDGKVVGEHIGLAFYTFGQRKGIGLGGSKSGSGEPWFVAAKDIASNTLYVVQGHDHPWLLSRELVAGNVSWVAGEPPADGFACGAKTRYRQADAACVFGGAATGAAAAGPAGEVRFSLAFDDAQWAVTPGQSAVLYDGEICLGGGIIESAATGQPGQATSAGHAPALAEAR</sequence>